<dbReference type="EC" id="5.3.1.23" evidence="1"/>
<dbReference type="EMBL" id="CP001029">
    <property type="protein sequence ID" value="ACB78819.1"/>
    <property type="molecule type" value="Genomic_DNA"/>
</dbReference>
<dbReference type="RefSeq" id="WP_012452575.1">
    <property type="nucleotide sequence ID" value="NC_010725.1"/>
</dbReference>
<dbReference type="SMR" id="B1ZL76"/>
<dbReference type="STRING" id="441620.Mpop_0641"/>
<dbReference type="KEGG" id="mpo:Mpop_0641"/>
<dbReference type="eggNOG" id="COG0182">
    <property type="taxonomic scope" value="Bacteria"/>
</dbReference>
<dbReference type="HOGENOM" id="CLU_016218_1_2_5"/>
<dbReference type="OrthoDB" id="9803436at2"/>
<dbReference type="UniPathway" id="UPA00904">
    <property type="reaction ID" value="UER00874"/>
</dbReference>
<dbReference type="Proteomes" id="UP000007136">
    <property type="component" value="Chromosome"/>
</dbReference>
<dbReference type="GO" id="GO:0046523">
    <property type="term" value="F:S-methyl-5-thioribose-1-phosphate isomerase activity"/>
    <property type="evidence" value="ECO:0007669"/>
    <property type="project" value="UniProtKB-UniRule"/>
</dbReference>
<dbReference type="GO" id="GO:0019509">
    <property type="term" value="P:L-methionine salvage from methylthioadenosine"/>
    <property type="evidence" value="ECO:0007669"/>
    <property type="project" value="UniProtKB-UniRule"/>
</dbReference>
<dbReference type="FunFam" id="1.20.120.420:FF:000003">
    <property type="entry name" value="Methylthioribose-1-phosphate isomerase"/>
    <property type="match status" value="1"/>
</dbReference>
<dbReference type="FunFam" id="3.40.50.10470:FF:000006">
    <property type="entry name" value="Methylthioribose-1-phosphate isomerase"/>
    <property type="match status" value="1"/>
</dbReference>
<dbReference type="Gene3D" id="1.20.120.420">
    <property type="entry name" value="translation initiation factor eif-2b, domain 1"/>
    <property type="match status" value="1"/>
</dbReference>
<dbReference type="Gene3D" id="3.40.50.10470">
    <property type="entry name" value="Translation initiation factor eif-2b, domain 2"/>
    <property type="match status" value="1"/>
</dbReference>
<dbReference type="HAMAP" id="MF_01678">
    <property type="entry name" value="Salvage_MtnA"/>
    <property type="match status" value="1"/>
</dbReference>
<dbReference type="InterPro" id="IPR000649">
    <property type="entry name" value="IF-2B-related"/>
</dbReference>
<dbReference type="InterPro" id="IPR005251">
    <property type="entry name" value="IF-M1Pi"/>
</dbReference>
<dbReference type="InterPro" id="IPR042529">
    <property type="entry name" value="IF_2B-like_C"/>
</dbReference>
<dbReference type="InterPro" id="IPR011559">
    <property type="entry name" value="Initiation_fac_2B_a/b/d"/>
</dbReference>
<dbReference type="InterPro" id="IPR027363">
    <property type="entry name" value="M1Pi_N"/>
</dbReference>
<dbReference type="InterPro" id="IPR037171">
    <property type="entry name" value="NagB/RpiA_transferase-like"/>
</dbReference>
<dbReference type="NCBIfam" id="TIGR00524">
    <property type="entry name" value="eIF-2B_rel"/>
    <property type="match status" value="1"/>
</dbReference>
<dbReference type="NCBIfam" id="NF004326">
    <property type="entry name" value="PRK05720.1"/>
    <property type="match status" value="1"/>
</dbReference>
<dbReference type="NCBIfam" id="TIGR00512">
    <property type="entry name" value="salvage_mtnA"/>
    <property type="match status" value="1"/>
</dbReference>
<dbReference type="PANTHER" id="PTHR43475">
    <property type="entry name" value="METHYLTHIORIBOSE-1-PHOSPHATE ISOMERASE"/>
    <property type="match status" value="1"/>
</dbReference>
<dbReference type="PANTHER" id="PTHR43475:SF1">
    <property type="entry name" value="METHYLTHIORIBOSE-1-PHOSPHATE ISOMERASE"/>
    <property type="match status" value="1"/>
</dbReference>
<dbReference type="Pfam" id="PF01008">
    <property type="entry name" value="IF-2B"/>
    <property type="match status" value="1"/>
</dbReference>
<dbReference type="SUPFAM" id="SSF100950">
    <property type="entry name" value="NagB/RpiA/CoA transferase-like"/>
    <property type="match status" value="1"/>
</dbReference>
<organism>
    <name type="scientific">Methylorubrum populi (strain ATCC BAA-705 / NCIMB 13946 / BJ001)</name>
    <name type="common">Methylobacterium populi</name>
    <dbReference type="NCBI Taxonomy" id="441620"/>
    <lineage>
        <taxon>Bacteria</taxon>
        <taxon>Pseudomonadati</taxon>
        <taxon>Pseudomonadota</taxon>
        <taxon>Alphaproteobacteria</taxon>
        <taxon>Hyphomicrobiales</taxon>
        <taxon>Methylobacteriaceae</taxon>
        <taxon>Methylorubrum</taxon>
    </lineage>
</organism>
<proteinExistence type="inferred from homology"/>
<name>MTNA_METPB</name>
<comment type="function">
    <text evidence="1">Catalyzes the interconversion of methylthioribose-1-phosphate (MTR-1-P) into methylthioribulose-1-phosphate (MTRu-1-P).</text>
</comment>
<comment type="catalytic activity">
    <reaction evidence="1">
        <text>5-(methylsulfanyl)-alpha-D-ribose 1-phosphate = 5-(methylsulfanyl)-D-ribulose 1-phosphate</text>
        <dbReference type="Rhea" id="RHEA:19989"/>
        <dbReference type="ChEBI" id="CHEBI:58533"/>
        <dbReference type="ChEBI" id="CHEBI:58548"/>
        <dbReference type="EC" id="5.3.1.23"/>
    </reaction>
</comment>
<comment type="pathway">
    <text evidence="1">Amino-acid biosynthesis; L-methionine biosynthesis via salvage pathway; L-methionine from S-methyl-5-thio-alpha-D-ribose 1-phosphate: step 1/6.</text>
</comment>
<comment type="similarity">
    <text evidence="2">Belongs to the eIF-2B alpha/beta/delta subunits family. MtnA subfamily.</text>
</comment>
<gene>
    <name evidence="1" type="primary">mtnA</name>
    <name type="ordered locus">Mpop_0641</name>
</gene>
<keyword id="KW-0028">Amino-acid biosynthesis</keyword>
<keyword id="KW-0413">Isomerase</keyword>
<keyword id="KW-0486">Methionine biosynthesis</keyword>
<evidence type="ECO:0000255" key="1">
    <source>
        <dbReference type="HAMAP-Rule" id="MF_01678"/>
    </source>
</evidence>
<evidence type="ECO:0000305" key="2"/>
<accession>B1ZL76</accession>
<reference key="1">
    <citation type="submission" date="2008-04" db="EMBL/GenBank/DDBJ databases">
        <title>Complete sequence of chromosome of Methylobacterium populi BJ001.</title>
        <authorList>
            <consortium name="US DOE Joint Genome Institute"/>
            <person name="Copeland A."/>
            <person name="Lucas S."/>
            <person name="Lapidus A."/>
            <person name="Glavina del Rio T."/>
            <person name="Dalin E."/>
            <person name="Tice H."/>
            <person name="Bruce D."/>
            <person name="Goodwin L."/>
            <person name="Pitluck S."/>
            <person name="Chertkov O."/>
            <person name="Brettin T."/>
            <person name="Detter J.C."/>
            <person name="Han C."/>
            <person name="Kuske C.R."/>
            <person name="Schmutz J."/>
            <person name="Larimer F."/>
            <person name="Land M."/>
            <person name="Hauser L."/>
            <person name="Kyrpides N."/>
            <person name="Mikhailova N."/>
            <person name="Marx C."/>
            <person name="Richardson P."/>
        </authorList>
    </citation>
    <scope>NUCLEOTIDE SEQUENCE [LARGE SCALE GENOMIC DNA]</scope>
    <source>
        <strain>ATCC BAA-705 / NCIMB 13946 / BJ001</strain>
    </source>
</reference>
<protein>
    <recommendedName>
        <fullName evidence="1">Methylthioribose-1-phosphate isomerase</fullName>
        <shortName evidence="1">M1Pi</shortName>
        <shortName evidence="1">MTR-1-P isomerase</shortName>
        <ecNumber evidence="1">5.3.1.23</ecNumber>
    </recommendedName>
    <alternativeName>
        <fullName evidence="1">S-methyl-5-thioribose-1-phosphate isomerase</fullName>
    </alternativeName>
</protein>
<sequence length="365" mass="38396">MKIDGRPYRTIFPEAGGNAVTVIDQTRLPFAFELKRLASLDDAAVAIRTMVVRGAPLIGVTAAYGLALAMREDASEAGIERAAATLAATRPTAINLRWALDRMAAVLRRAPEAERAALAFTEAASIAEEDVASCRAIGEHGARILAEIAVKKGGPVNVLTHCNAGWLATVDWGTALAPIYVAHDAGVPVHVFVDETRPRNQGAALTAFELNAHGVPHTVIADNAGGHLMQHGQVDVCIVGSDRTTAAGDVCNKIGTYLKALAASDNRIPFYAALPFSTIDWTLADGVRDIPIEERDAREVTHLTGRTDDGAFATVAVVSPGSPVANPAFDVTPARLVTGLITERGVCAATEEGLAGLYPERRKAA</sequence>
<feature type="chain" id="PRO_0000357204" description="Methylthioribose-1-phosphate isomerase">
    <location>
        <begin position="1"/>
        <end position="365"/>
    </location>
</feature>
<feature type="active site" description="Proton donor" evidence="1">
    <location>
        <position position="242"/>
    </location>
</feature>
<feature type="binding site" evidence="1">
    <location>
        <begin position="53"/>
        <end position="55"/>
    </location>
    <ligand>
        <name>substrate</name>
    </ligand>
</feature>
<feature type="binding site" evidence="1">
    <location>
        <position position="90"/>
    </location>
    <ligand>
        <name>substrate</name>
    </ligand>
</feature>
<feature type="binding site" evidence="1">
    <location>
        <position position="201"/>
    </location>
    <ligand>
        <name>substrate</name>
    </ligand>
</feature>
<feature type="binding site" evidence="1">
    <location>
        <begin position="252"/>
        <end position="253"/>
    </location>
    <ligand>
        <name>substrate</name>
    </ligand>
</feature>
<feature type="site" description="Transition state stabilizer" evidence="1">
    <location>
        <position position="162"/>
    </location>
</feature>